<reference key="1">
    <citation type="submission" date="2006-08" db="EMBL/GenBank/DDBJ databases">
        <authorList>
            <consortium name="NIH - Mammalian Gene Collection (MGC) project"/>
        </authorList>
    </citation>
    <scope>NUCLEOTIDE SEQUENCE [LARGE SCALE MRNA]</scope>
    <source>
        <strain>Hereford</strain>
        <tissue>Fetal cerebellum</tissue>
    </source>
</reference>
<accession>Q0VCI6</accession>
<feature type="chain" id="PRO_0000307327" description="PIH1 domain-containing protein 1">
    <location>
        <begin position="1"/>
        <end position="290"/>
    </location>
</feature>
<feature type="region of interest" description="Disordered" evidence="3">
    <location>
        <begin position="34"/>
        <end position="53"/>
    </location>
</feature>
<feature type="compositionally biased region" description="Polar residues" evidence="3">
    <location>
        <begin position="34"/>
        <end position="50"/>
    </location>
</feature>
<feature type="site" description="Interacts with TELO2" evidence="2">
    <location>
        <position position="57"/>
    </location>
</feature>
<feature type="site" description="Interacts with TELO2" evidence="2">
    <location>
        <position position="64"/>
    </location>
</feature>
<feature type="site" description="Interacts with TELO2" evidence="1">
    <location>
        <position position="113"/>
    </location>
</feature>
<feature type="modified residue" description="Phosphoserine" evidence="2">
    <location>
        <position position="173"/>
    </location>
</feature>
<name>PIHD1_BOVIN</name>
<dbReference type="EMBL" id="BC120150">
    <property type="protein sequence ID" value="AAI20151.1"/>
    <property type="molecule type" value="mRNA"/>
</dbReference>
<dbReference type="RefSeq" id="NP_001068863.1">
    <property type="nucleotide sequence ID" value="NM_001075395.1"/>
</dbReference>
<dbReference type="RefSeq" id="XP_005219284.2">
    <property type="nucleotide sequence ID" value="XM_005219227.5"/>
</dbReference>
<dbReference type="SMR" id="Q0VCI6"/>
<dbReference type="FunCoup" id="Q0VCI6">
    <property type="interactions" value="2392"/>
</dbReference>
<dbReference type="STRING" id="9913.ENSBTAP00000021978"/>
<dbReference type="PaxDb" id="9913-ENSBTAP00000021978"/>
<dbReference type="GeneID" id="509212"/>
<dbReference type="KEGG" id="bta:509212"/>
<dbReference type="CTD" id="55011"/>
<dbReference type="VEuPathDB" id="HostDB:ENSBTAG00000016526"/>
<dbReference type="eggNOG" id="KOG4356">
    <property type="taxonomic scope" value="Eukaryota"/>
</dbReference>
<dbReference type="InParanoid" id="Q0VCI6"/>
<dbReference type="OMA" id="KLKNRKC"/>
<dbReference type="OrthoDB" id="5135119at2759"/>
<dbReference type="Proteomes" id="UP000009136">
    <property type="component" value="Chromosome 18"/>
</dbReference>
<dbReference type="Bgee" id="ENSBTAG00000016526">
    <property type="expression patterns" value="Expressed in anterior segment of eyeball and 106 other cell types or tissues"/>
</dbReference>
<dbReference type="GO" id="GO:0005737">
    <property type="term" value="C:cytoplasm"/>
    <property type="evidence" value="ECO:0000318"/>
    <property type="project" value="GO_Central"/>
</dbReference>
<dbReference type="GO" id="GO:0005634">
    <property type="term" value="C:nucleus"/>
    <property type="evidence" value="ECO:0000250"/>
    <property type="project" value="UniProtKB"/>
</dbReference>
<dbReference type="GO" id="GO:0097255">
    <property type="term" value="C:R2TP complex"/>
    <property type="evidence" value="ECO:0000318"/>
    <property type="project" value="GO_Central"/>
</dbReference>
<dbReference type="GO" id="GO:1990904">
    <property type="term" value="C:ribonucleoprotein complex"/>
    <property type="evidence" value="ECO:0000318"/>
    <property type="project" value="GO_Central"/>
</dbReference>
<dbReference type="GO" id="GO:0000492">
    <property type="term" value="P:box C/D snoRNP assembly"/>
    <property type="evidence" value="ECO:0000318"/>
    <property type="project" value="GO_Central"/>
</dbReference>
<dbReference type="GO" id="GO:0006364">
    <property type="term" value="P:rRNA processing"/>
    <property type="evidence" value="ECO:0000318"/>
    <property type="project" value="GO_Central"/>
</dbReference>
<dbReference type="InterPro" id="IPR050734">
    <property type="entry name" value="PIH1/Kintoun_subfamily"/>
</dbReference>
<dbReference type="InterPro" id="IPR012981">
    <property type="entry name" value="PIH1_N"/>
</dbReference>
<dbReference type="InterPro" id="IPR041442">
    <property type="entry name" value="PIH1D1/2/3_CS-like"/>
</dbReference>
<dbReference type="PANTHER" id="PTHR22997">
    <property type="entry name" value="PIH1 DOMAIN-CONTAINING PROTEIN 1"/>
    <property type="match status" value="1"/>
</dbReference>
<dbReference type="PANTHER" id="PTHR22997:SF0">
    <property type="entry name" value="PIH1 DOMAIN-CONTAINING PROTEIN 1"/>
    <property type="match status" value="1"/>
</dbReference>
<dbReference type="Pfam" id="PF08190">
    <property type="entry name" value="PIH1"/>
    <property type="match status" value="1"/>
</dbReference>
<dbReference type="Pfam" id="PF18201">
    <property type="entry name" value="PIH1_CS"/>
    <property type="match status" value="1"/>
</dbReference>
<proteinExistence type="evidence at transcript level"/>
<gene>
    <name type="primary">PIH1D1</name>
</gene>
<evidence type="ECO:0000250" key="1">
    <source>
        <dbReference type="UniProtKB" id="Q9CQJ2"/>
    </source>
</evidence>
<evidence type="ECO:0000250" key="2">
    <source>
        <dbReference type="UniProtKB" id="Q9NWS0"/>
    </source>
</evidence>
<evidence type="ECO:0000256" key="3">
    <source>
        <dbReference type="SAM" id="MobiDB-lite"/>
    </source>
</evidence>
<evidence type="ECO:0000305" key="4"/>
<sequence length="290" mass="32415">MADSKMLVPELNDAETMGAETSRFEELLLQASKELQQAQTSRPESTQIQPQPGFCIKTNSAEGKVFINICHSPSIPPPADLTEDELLQMLEEDQAGFRIPMSLGEPHAELDAKGQGCTAYDVAVNSDFFRRMQNSDFLRELVITIAREGLEDKYGLQLNPEWRILKNRPFLGSISQQNIRSQQRPRIQELGNLHTPSSPRPEAGPEKPHLSLWLEAPDLLLAEIDLPKLDGALGLSLEVGENRLVMGGPQQLYHLDTYIPLRINCDESKAAFHQKRKQLMVAMPLLSVPS</sequence>
<keyword id="KW-0539">Nucleus</keyword>
<keyword id="KW-0597">Phosphoprotein</keyword>
<keyword id="KW-1185">Reference proteome</keyword>
<keyword id="KW-0804">Transcription</keyword>
<keyword id="KW-0805">Transcription regulation</keyword>
<protein>
    <recommendedName>
        <fullName>PIH1 domain-containing protein 1</fullName>
    </recommendedName>
</protein>
<organism>
    <name type="scientific">Bos taurus</name>
    <name type="common">Bovine</name>
    <dbReference type="NCBI Taxonomy" id="9913"/>
    <lineage>
        <taxon>Eukaryota</taxon>
        <taxon>Metazoa</taxon>
        <taxon>Chordata</taxon>
        <taxon>Craniata</taxon>
        <taxon>Vertebrata</taxon>
        <taxon>Euteleostomi</taxon>
        <taxon>Mammalia</taxon>
        <taxon>Eutheria</taxon>
        <taxon>Laurasiatheria</taxon>
        <taxon>Artiodactyla</taxon>
        <taxon>Ruminantia</taxon>
        <taxon>Pecora</taxon>
        <taxon>Bovidae</taxon>
        <taxon>Bovinae</taxon>
        <taxon>Bos</taxon>
    </lineage>
</organism>
<comment type="function">
    <text evidence="2">Involved in the assembly of C/D box small nucleolar ribonucleoprotein (snoRNP) particles (By similarity). Recruits the SWI/SNF complex to the core promoter of rRNA genes and enhances pre-rRNA transcription (By similarity). Mediates interaction of TELO2 with the R2TP complex which is necessary for the stability of MTOR and SMG1 (By similarity). Positively regulates the assembly and activity of the mTORC1 complex (By similarity).</text>
</comment>
<comment type="subunit">
    <text evidence="1 2">Component of the R2TP complex composed at least of RUVBL1, RUVBL2, RPAP3 and PIHD1 (By similarity). Component of the PAQosome complex which is responsible for the biogenesis of several protein complexes and which consists of R2TP complex members RUVBL1, RUVBL2, RPAP3 and PIH1D1, URI complex members PFDN2, PFDN6, PDRG1, UXT and URI1 as well as ASDURF, POLR2E and DNAAF10/WDR92 (By similarity). Interacts with phosphorylated TELO2 and mediates interaction of TELO2 with the R2TP complex (By similarity). Interacts with phosphorylated ECD, EFTUD2/SNRP116, RPB1 and UBR5 and with RPB1 in a phosphorylation-independent manner (By similarity). Interacts with the core C/D box snoRNP particle components NOP58 and FBL and with RUVBL1/TIP49 (By similarity). Interacts with RPAP3 and DNAAF10 (By similarity). Interacts with histone H4 and with SWI/SNF complex member SMARCB1/SNF5 (By similarity). Interacts with the mTORC1 complex member RPTOR (By similarity). Interacts with MSL1 (By similarity).</text>
</comment>
<comment type="subcellular location">
    <subcellularLocation>
        <location evidence="1">Nucleus</location>
    </subcellularLocation>
</comment>
<comment type="domain">
    <text evidence="2">The N-terminal region is required for binding to phosphorylated substrates while the C-terminal region binds to the other R2TP complex components.</text>
</comment>
<comment type="similarity">
    <text evidence="4">Belongs to the PIH1 family.</text>
</comment>